<proteinExistence type="evidence at protein level"/>
<sequence length="59" mass="6355">MAELKITLKRSVIGRPQNQRATVKALGLGKVNSTVTKPANEAIKGMVNTISHLVDVEEV</sequence>
<comment type="subunit">
    <text evidence="1">Part of the 50S ribosomal subunit.</text>
</comment>
<comment type="similarity">
    <text evidence="1">Belongs to the universal ribosomal protein uL30 family.</text>
</comment>
<organism>
    <name type="scientific">Enterococcus faecalis (strain ATCC 700802 / V583)</name>
    <dbReference type="NCBI Taxonomy" id="226185"/>
    <lineage>
        <taxon>Bacteria</taxon>
        <taxon>Bacillati</taxon>
        <taxon>Bacillota</taxon>
        <taxon>Bacilli</taxon>
        <taxon>Lactobacillales</taxon>
        <taxon>Enterococcaceae</taxon>
        <taxon>Enterococcus</taxon>
    </lineage>
</organism>
<gene>
    <name evidence="1" type="primary">rpmD</name>
    <name type="ordered locus">EF_0225</name>
</gene>
<accession>Q839E6</accession>
<evidence type="ECO:0000255" key="1">
    <source>
        <dbReference type="HAMAP-Rule" id="MF_01371"/>
    </source>
</evidence>
<evidence type="ECO:0000305" key="2"/>
<evidence type="ECO:0007829" key="3">
    <source>
        <dbReference type="PDB" id="6WU9"/>
    </source>
</evidence>
<protein>
    <recommendedName>
        <fullName evidence="1">Large ribosomal subunit protein uL30</fullName>
    </recommendedName>
    <alternativeName>
        <fullName evidence="2">50S ribosomal protein L30</fullName>
    </alternativeName>
</protein>
<keyword id="KW-0002">3D-structure</keyword>
<keyword id="KW-1185">Reference proteome</keyword>
<keyword id="KW-0687">Ribonucleoprotein</keyword>
<keyword id="KW-0689">Ribosomal protein</keyword>
<feature type="chain" id="PRO_1000056037" description="Large ribosomal subunit protein uL30">
    <location>
        <begin position="1"/>
        <end position="59"/>
    </location>
</feature>
<feature type="strand" evidence="3">
    <location>
        <begin position="3"/>
        <end position="8"/>
    </location>
</feature>
<feature type="helix" evidence="3">
    <location>
        <begin position="17"/>
        <end position="26"/>
    </location>
</feature>
<feature type="strand" evidence="3">
    <location>
        <begin position="34"/>
        <end position="38"/>
    </location>
</feature>
<feature type="helix" evidence="3">
    <location>
        <begin position="41"/>
        <end position="50"/>
    </location>
</feature>
<feature type="helix" evidence="3">
    <location>
        <begin position="51"/>
        <end position="53"/>
    </location>
</feature>
<feature type="strand" evidence="3">
    <location>
        <begin position="54"/>
        <end position="58"/>
    </location>
</feature>
<dbReference type="EMBL" id="AE016830">
    <property type="protein sequence ID" value="AAO80093.1"/>
    <property type="molecule type" value="Genomic_DNA"/>
</dbReference>
<dbReference type="RefSeq" id="NP_814022.1">
    <property type="nucleotide sequence ID" value="NC_004668.1"/>
</dbReference>
<dbReference type="RefSeq" id="WP_002356220.1">
    <property type="nucleotide sequence ID" value="NZ_KE136524.1"/>
</dbReference>
<dbReference type="PDB" id="6WU9">
    <property type="method" value="EM"/>
    <property type="resolution" value="2.90 A"/>
    <property type="chains" value="0=2-59"/>
</dbReference>
<dbReference type="PDB" id="7P7Q">
    <property type="method" value="EM"/>
    <property type="resolution" value="2.40 A"/>
    <property type="chains" value="2=1-59"/>
</dbReference>
<dbReference type="PDB" id="7P7R">
    <property type="method" value="EM"/>
    <property type="resolution" value="2.90 A"/>
    <property type="chains" value="2=1-59"/>
</dbReference>
<dbReference type="PDBsum" id="6WU9"/>
<dbReference type="PDBsum" id="7P7Q"/>
<dbReference type="PDBsum" id="7P7R"/>
<dbReference type="EMDB" id="EMD-13241"/>
<dbReference type="EMDB" id="EMD-13242"/>
<dbReference type="SMR" id="Q839E6"/>
<dbReference type="STRING" id="226185.EF_0225"/>
<dbReference type="EnsemblBacteria" id="AAO80093">
    <property type="protein sequence ID" value="AAO80093"/>
    <property type="gene ID" value="EF_0225"/>
</dbReference>
<dbReference type="GeneID" id="60892719"/>
<dbReference type="KEGG" id="efa:EF0225"/>
<dbReference type="PATRIC" id="fig|226185.45.peg.42"/>
<dbReference type="eggNOG" id="COG1841">
    <property type="taxonomic scope" value="Bacteria"/>
</dbReference>
<dbReference type="HOGENOM" id="CLU_131047_2_1_9"/>
<dbReference type="Proteomes" id="UP000001415">
    <property type="component" value="Chromosome"/>
</dbReference>
<dbReference type="GO" id="GO:0022625">
    <property type="term" value="C:cytosolic large ribosomal subunit"/>
    <property type="evidence" value="ECO:0007669"/>
    <property type="project" value="TreeGrafter"/>
</dbReference>
<dbReference type="GO" id="GO:0003735">
    <property type="term" value="F:structural constituent of ribosome"/>
    <property type="evidence" value="ECO:0007669"/>
    <property type="project" value="InterPro"/>
</dbReference>
<dbReference type="GO" id="GO:0006412">
    <property type="term" value="P:translation"/>
    <property type="evidence" value="ECO:0007669"/>
    <property type="project" value="UniProtKB-UniRule"/>
</dbReference>
<dbReference type="CDD" id="cd01658">
    <property type="entry name" value="Ribosomal_L30"/>
    <property type="match status" value="1"/>
</dbReference>
<dbReference type="FunFam" id="3.30.1390.20:FF:000001">
    <property type="entry name" value="50S ribosomal protein L30"/>
    <property type="match status" value="1"/>
</dbReference>
<dbReference type="Gene3D" id="3.30.1390.20">
    <property type="entry name" value="Ribosomal protein L30, ferredoxin-like fold domain"/>
    <property type="match status" value="1"/>
</dbReference>
<dbReference type="HAMAP" id="MF_01371_B">
    <property type="entry name" value="Ribosomal_uL30_B"/>
    <property type="match status" value="1"/>
</dbReference>
<dbReference type="InterPro" id="IPR036919">
    <property type="entry name" value="Ribo_uL30_ferredoxin-like_sf"/>
</dbReference>
<dbReference type="InterPro" id="IPR005996">
    <property type="entry name" value="Ribosomal_uL30_bac-type"/>
</dbReference>
<dbReference type="InterPro" id="IPR018038">
    <property type="entry name" value="Ribosomal_uL30_CS"/>
</dbReference>
<dbReference type="InterPro" id="IPR016082">
    <property type="entry name" value="Ribosomal_uL30_ferredoxin-like"/>
</dbReference>
<dbReference type="NCBIfam" id="TIGR01308">
    <property type="entry name" value="rpmD_bact"/>
    <property type="match status" value="1"/>
</dbReference>
<dbReference type="PANTHER" id="PTHR15892:SF2">
    <property type="entry name" value="LARGE RIBOSOMAL SUBUNIT PROTEIN UL30M"/>
    <property type="match status" value="1"/>
</dbReference>
<dbReference type="PANTHER" id="PTHR15892">
    <property type="entry name" value="MITOCHONDRIAL RIBOSOMAL PROTEIN L30"/>
    <property type="match status" value="1"/>
</dbReference>
<dbReference type="Pfam" id="PF00327">
    <property type="entry name" value="Ribosomal_L30"/>
    <property type="match status" value="1"/>
</dbReference>
<dbReference type="PIRSF" id="PIRSF002211">
    <property type="entry name" value="Ribosomal_L30_bac-type"/>
    <property type="match status" value="1"/>
</dbReference>
<dbReference type="SUPFAM" id="SSF55129">
    <property type="entry name" value="Ribosomal protein L30p/L7e"/>
    <property type="match status" value="1"/>
</dbReference>
<dbReference type="PROSITE" id="PS00634">
    <property type="entry name" value="RIBOSOMAL_L30"/>
    <property type="match status" value="1"/>
</dbReference>
<name>RL30_ENTFA</name>
<reference key="1">
    <citation type="journal article" date="2003" name="Science">
        <title>Role of mobile DNA in the evolution of vancomycin-resistant Enterococcus faecalis.</title>
        <authorList>
            <person name="Paulsen I.T."/>
            <person name="Banerjei L."/>
            <person name="Myers G.S.A."/>
            <person name="Nelson K.E."/>
            <person name="Seshadri R."/>
            <person name="Read T.D."/>
            <person name="Fouts D.E."/>
            <person name="Eisen J.A."/>
            <person name="Gill S.R."/>
            <person name="Heidelberg J.F."/>
            <person name="Tettelin H."/>
            <person name="Dodson R.J."/>
            <person name="Umayam L.A."/>
            <person name="Brinkac L.M."/>
            <person name="Beanan M.J."/>
            <person name="Daugherty S.C."/>
            <person name="DeBoy R.T."/>
            <person name="Durkin S.A."/>
            <person name="Kolonay J.F."/>
            <person name="Madupu R."/>
            <person name="Nelson W.C."/>
            <person name="Vamathevan J.J."/>
            <person name="Tran B."/>
            <person name="Upton J."/>
            <person name="Hansen T."/>
            <person name="Shetty J."/>
            <person name="Khouri H.M."/>
            <person name="Utterback T.R."/>
            <person name="Radune D."/>
            <person name="Ketchum K.A."/>
            <person name="Dougherty B.A."/>
            <person name="Fraser C.M."/>
        </authorList>
    </citation>
    <scope>NUCLEOTIDE SEQUENCE [LARGE SCALE GENOMIC DNA]</scope>
    <source>
        <strain>ATCC 700802 / V583</strain>
    </source>
</reference>